<name>LPXK_ECOSE</name>
<gene>
    <name evidence="1" type="primary">lpxK</name>
    <name type="ordered locus">ECSE_0974</name>
</gene>
<protein>
    <recommendedName>
        <fullName evidence="1">Tetraacyldisaccharide 4'-kinase</fullName>
        <ecNumber evidence="1">2.7.1.130</ecNumber>
    </recommendedName>
    <alternativeName>
        <fullName evidence="1">Lipid A 4'-kinase</fullName>
    </alternativeName>
</protein>
<accession>B6I8Y7</accession>
<evidence type="ECO:0000255" key="1">
    <source>
        <dbReference type="HAMAP-Rule" id="MF_00409"/>
    </source>
</evidence>
<feature type="chain" id="PRO_1000123712" description="Tetraacyldisaccharide 4'-kinase">
    <location>
        <begin position="1"/>
        <end position="328"/>
    </location>
</feature>
<feature type="binding site" evidence="1">
    <location>
        <begin position="55"/>
        <end position="62"/>
    </location>
    <ligand>
        <name>ATP</name>
        <dbReference type="ChEBI" id="CHEBI:30616"/>
    </ligand>
</feature>
<comment type="function">
    <text evidence="1">Transfers the gamma-phosphate of ATP to the 4'-position of a tetraacyldisaccharide 1-phosphate intermediate (termed DS-1-P) to form tetraacyldisaccharide 1,4'-bis-phosphate (lipid IVA).</text>
</comment>
<comment type="catalytic activity">
    <reaction evidence="1">
        <text>a lipid A disaccharide + ATP = a lipid IVA + ADP + H(+)</text>
        <dbReference type="Rhea" id="RHEA:67840"/>
        <dbReference type="ChEBI" id="CHEBI:15378"/>
        <dbReference type="ChEBI" id="CHEBI:30616"/>
        <dbReference type="ChEBI" id="CHEBI:176343"/>
        <dbReference type="ChEBI" id="CHEBI:176425"/>
        <dbReference type="ChEBI" id="CHEBI:456216"/>
        <dbReference type="EC" id="2.7.1.130"/>
    </reaction>
</comment>
<comment type="pathway">
    <text evidence="1">Glycolipid biosynthesis; lipid IV(A) biosynthesis; lipid IV(A) from (3R)-3-hydroxytetradecanoyl-[acyl-carrier-protein] and UDP-N-acetyl-alpha-D-glucosamine: step 6/6.</text>
</comment>
<comment type="similarity">
    <text evidence="1">Belongs to the LpxK family.</text>
</comment>
<sequence length="328" mass="35563">MIEKIWSGESPLWRLLLPLSWLYGLVSGAIRLCYKLKLKRAWRAPVPVVVVGNLTAGGNGKTPVVVWLVEQLQQRGIRVGVVSRGYGGKAESYPLLLSADTTTAQAGDEPVLIYQRTDAPVAVSPVRSDAVKAILAQHPDVQIIVTDDGLQHYRLARDVEIVVIDGVRRFGNGWWLPAGPMRERAGRLKSVDAVIVNGGVPRSGEIPMHLLPGQAVNLRTGTRCDVAQLEHVVAMAGIGHPPRFFATLKMCGVQPEKCVPLADHQSLNHADVSALVSAGQTLVMTEKDAVKCRAFAEENWWYLPVDAQLSGDEPAKLLTQLTSLASGN</sequence>
<dbReference type="EC" id="2.7.1.130" evidence="1"/>
<dbReference type="EMBL" id="AP009240">
    <property type="protein sequence ID" value="BAG76498.1"/>
    <property type="molecule type" value="Genomic_DNA"/>
</dbReference>
<dbReference type="RefSeq" id="WP_000570540.1">
    <property type="nucleotide sequence ID" value="NC_011415.1"/>
</dbReference>
<dbReference type="SMR" id="B6I8Y7"/>
<dbReference type="GeneID" id="93776500"/>
<dbReference type="KEGG" id="ecy:ECSE_0974"/>
<dbReference type="HOGENOM" id="CLU_038816_2_0_6"/>
<dbReference type="UniPathway" id="UPA00359">
    <property type="reaction ID" value="UER00482"/>
</dbReference>
<dbReference type="Proteomes" id="UP000008199">
    <property type="component" value="Chromosome"/>
</dbReference>
<dbReference type="GO" id="GO:0005886">
    <property type="term" value="C:plasma membrane"/>
    <property type="evidence" value="ECO:0007669"/>
    <property type="project" value="TreeGrafter"/>
</dbReference>
<dbReference type="GO" id="GO:0005524">
    <property type="term" value="F:ATP binding"/>
    <property type="evidence" value="ECO:0007669"/>
    <property type="project" value="UniProtKB-UniRule"/>
</dbReference>
<dbReference type="GO" id="GO:0009029">
    <property type="term" value="F:tetraacyldisaccharide 4'-kinase activity"/>
    <property type="evidence" value="ECO:0007669"/>
    <property type="project" value="UniProtKB-UniRule"/>
</dbReference>
<dbReference type="GO" id="GO:0009245">
    <property type="term" value="P:lipid A biosynthetic process"/>
    <property type="evidence" value="ECO:0007669"/>
    <property type="project" value="UniProtKB-UniRule"/>
</dbReference>
<dbReference type="GO" id="GO:0009244">
    <property type="term" value="P:lipopolysaccharide core region biosynthetic process"/>
    <property type="evidence" value="ECO:0007669"/>
    <property type="project" value="TreeGrafter"/>
</dbReference>
<dbReference type="HAMAP" id="MF_00409">
    <property type="entry name" value="LpxK"/>
    <property type="match status" value="1"/>
</dbReference>
<dbReference type="InterPro" id="IPR003758">
    <property type="entry name" value="LpxK"/>
</dbReference>
<dbReference type="InterPro" id="IPR027417">
    <property type="entry name" value="P-loop_NTPase"/>
</dbReference>
<dbReference type="NCBIfam" id="TIGR00682">
    <property type="entry name" value="lpxK"/>
    <property type="match status" value="1"/>
</dbReference>
<dbReference type="PANTHER" id="PTHR42724">
    <property type="entry name" value="TETRAACYLDISACCHARIDE 4'-KINASE"/>
    <property type="match status" value="1"/>
</dbReference>
<dbReference type="PANTHER" id="PTHR42724:SF1">
    <property type="entry name" value="TETRAACYLDISACCHARIDE 4'-KINASE, MITOCHONDRIAL-RELATED"/>
    <property type="match status" value="1"/>
</dbReference>
<dbReference type="Pfam" id="PF02606">
    <property type="entry name" value="LpxK"/>
    <property type="match status" value="1"/>
</dbReference>
<dbReference type="SUPFAM" id="SSF52540">
    <property type="entry name" value="P-loop containing nucleoside triphosphate hydrolases"/>
    <property type="match status" value="1"/>
</dbReference>
<reference key="1">
    <citation type="journal article" date="2008" name="DNA Res.">
        <title>Complete genome sequence and comparative analysis of the wild-type commensal Escherichia coli strain SE11 isolated from a healthy adult.</title>
        <authorList>
            <person name="Oshima K."/>
            <person name="Toh H."/>
            <person name="Ogura Y."/>
            <person name="Sasamoto H."/>
            <person name="Morita H."/>
            <person name="Park S.-H."/>
            <person name="Ooka T."/>
            <person name="Iyoda S."/>
            <person name="Taylor T.D."/>
            <person name="Hayashi T."/>
            <person name="Itoh K."/>
            <person name="Hattori M."/>
        </authorList>
    </citation>
    <scope>NUCLEOTIDE SEQUENCE [LARGE SCALE GENOMIC DNA]</scope>
    <source>
        <strain>SE11</strain>
    </source>
</reference>
<organism>
    <name type="scientific">Escherichia coli (strain SE11)</name>
    <dbReference type="NCBI Taxonomy" id="409438"/>
    <lineage>
        <taxon>Bacteria</taxon>
        <taxon>Pseudomonadati</taxon>
        <taxon>Pseudomonadota</taxon>
        <taxon>Gammaproteobacteria</taxon>
        <taxon>Enterobacterales</taxon>
        <taxon>Enterobacteriaceae</taxon>
        <taxon>Escherichia</taxon>
    </lineage>
</organism>
<keyword id="KW-0067">ATP-binding</keyword>
<keyword id="KW-0418">Kinase</keyword>
<keyword id="KW-0441">Lipid A biosynthesis</keyword>
<keyword id="KW-0444">Lipid biosynthesis</keyword>
<keyword id="KW-0443">Lipid metabolism</keyword>
<keyword id="KW-0547">Nucleotide-binding</keyword>
<keyword id="KW-0808">Transferase</keyword>
<proteinExistence type="inferred from homology"/>